<organism>
    <name type="scientific">Yersinia mollaretii</name>
    <dbReference type="NCBI Taxonomy" id="33060"/>
    <lineage>
        <taxon>Bacteria</taxon>
        <taxon>Pseudomonadati</taxon>
        <taxon>Pseudomonadota</taxon>
        <taxon>Gammaproteobacteria</taxon>
        <taxon>Enterobacterales</taxon>
        <taxon>Yersiniaceae</taxon>
        <taxon>Yersinia</taxon>
    </lineage>
</organism>
<comment type="function">
    <text evidence="1">Involved in urease metallocenter assembly. Binds nickel. Probably functions as a nickel donor during metallocenter assembly.</text>
</comment>
<comment type="subcellular location">
    <subcellularLocation>
        <location evidence="1">Cytoplasm</location>
    </subcellularLocation>
</comment>
<comment type="similarity">
    <text evidence="1">Belongs to the UreE family.</text>
</comment>
<accession>Q6UR41</accession>
<protein>
    <recommendedName>
        <fullName evidence="1">Urease accessory protein UreE</fullName>
    </recommendedName>
</protein>
<name>UREE_YERMO</name>
<keyword id="KW-0143">Chaperone</keyword>
<keyword id="KW-0963">Cytoplasm</keyword>
<keyword id="KW-0533">Nickel</keyword>
<keyword id="KW-0996">Nickel insertion</keyword>
<sequence>MILIEHILGNVKKDPVWQAKLKDATFDLLILDQREAQKSRCRKSSTQGLDLGISLDRHVVLADGDVLAWDEENNVAVVVQINLRDVMVIDLSELKSRSPDELIKTCFELGHALGNQHWKAVTKHNEVYVPLTVATSMMDSVMRTHGFQHLPFRFVKGAEILPQLSNSEARLLFGGAEDSDTHVHVDSPLDEPHGSGLHVHAIHSHGDGHSHSHSHDHDHDHRHDDHDHKH</sequence>
<dbReference type="EMBL" id="AY363685">
    <property type="protein sequence ID" value="AAR15129.1"/>
    <property type="molecule type" value="Genomic_DNA"/>
</dbReference>
<dbReference type="RefSeq" id="WP_004874554.1">
    <property type="nucleotide sequence ID" value="NZ_PGLU01000009.1"/>
</dbReference>
<dbReference type="SMR" id="Q6UR41"/>
<dbReference type="STRING" id="33060.ERS008532_03262"/>
<dbReference type="GeneID" id="57916123"/>
<dbReference type="GO" id="GO:0005737">
    <property type="term" value="C:cytoplasm"/>
    <property type="evidence" value="ECO:0007669"/>
    <property type="project" value="UniProtKB-SubCell"/>
</dbReference>
<dbReference type="GO" id="GO:0016151">
    <property type="term" value="F:nickel cation binding"/>
    <property type="evidence" value="ECO:0007669"/>
    <property type="project" value="UniProtKB-UniRule"/>
</dbReference>
<dbReference type="GO" id="GO:0051082">
    <property type="term" value="F:unfolded protein binding"/>
    <property type="evidence" value="ECO:0007669"/>
    <property type="project" value="UniProtKB-UniRule"/>
</dbReference>
<dbReference type="GO" id="GO:0006457">
    <property type="term" value="P:protein folding"/>
    <property type="evidence" value="ECO:0007669"/>
    <property type="project" value="InterPro"/>
</dbReference>
<dbReference type="CDD" id="cd00571">
    <property type="entry name" value="UreE"/>
    <property type="match status" value="1"/>
</dbReference>
<dbReference type="Gene3D" id="2.60.260.20">
    <property type="entry name" value="Urease metallochaperone UreE, N-terminal domain"/>
    <property type="match status" value="1"/>
</dbReference>
<dbReference type="HAMAP" id="MF_00822">
    <property type="entry name" value="UreE"/>
    <property type="match status" value="1"/>
</dbReference>
<dbReference type="InterPro" id="IPR012406">
    <property type="entry name" value="UreE"/>
</dbReference>
<dbReference type="InterPro" id="IPR004029">
    <property type="entry name" value="UreE_N"/>
</dbReference>
<dbReference type="InterPro" id="IPR036118">
    <property type="entry name" value="UreE_N_sf"/>
</dbReference>
<dbReference type="NCBIfam" id="NF009761">
    <property type="entry name" value="PRK13262.1"/>
    <property type="match status" value="1"/>
</dbReference>
<dbReference type="Pfam" id="PF02814">
    <property type="entry name" value="UreE_N"/>
    <property type="match status" value="1"/>
</dbReference>
<dbReference type="PIRSF" id="PIRSF036402">
    <property type="entry name" value="Ureas_acces_UreE"/>
    <property type="match status" value="1"/>
</dbReference>
<dbReference type="SMART" id="SM00988">
    <property type="entry name" value="UreE_N"/>
    <property type="match status" value="1"/>
</dbReference>
<dbReference type="SUPFAM" id="SSF69287">
    <property type="entry name" value="Urease metallochaperone UreE, N-terminal domain"/>
    <property type="match status" value="1"/>
</dbReference>
<evidence type="ECO:0000255" key="1">
    <source>
        <dbReference type="HAMAP-Rule" id="MF_00822"/>
    </source>
</evidence>
<evidence type="ECO:0000256" key="2">
    <source>
        <dbReference type="SAM" id="MobiDB-lite"/>
    </source>
</evidence>
<gene>
    <name evidence="1" type="primary">ureE</name>
</gene>
<proteinExistence type="inferred from homology"/>
<reference key="1">
    <citation type="submission" date="2003-08" db="EMBL/GenBank/DDBJ databases">
        <title>Yersinia mollaretii urease gene locus (ureABCEFGD), and urea transporter gene (yut) and nickel transporter gene (ureH).</title>
        <authorList>
            <person name="Sebbane F."/>
            <person name="Lemaitre N."/>
            <person name="Simonet M."/>
        </authorList>
    </citation>
    <scope>NUCLEOTIDE SEQUENCE [GENOMIC DNA]</scope>
</reference>
<feature type="chain" id="PRO_0000223460" description="Urease accessory protein UreE">
    <location>
        <begin position="1"/>
        <end position="230"/>
    </location>
</feature>
<feature type="region of interest" description="Disordered" evidence="2">
    <location>
        <begin position="182"/>
        <end position="230"/>
    </location>
</feature>
<feature type="compositionally biased region" description="Basic and acidic residues" evidence="2">
    <location>
        <begin position="182"/>
        <end position="193"/>
    </location>
</feature>
<feature type="compositionally biased region" description="Basic and acidic residues" evidence="2">
    <location>
        <begin position="204"/>
        <end position="230"/>
    </location>
</feature>